<comment type="function">
    <text evidence="1">Member of a network of 50S ribosomal subunit biogenesis factors which assembles along the 30S-50S interface, preventing incorrect 23S rRNA structures from forming. Promotes peptidyl transferase center (PTC) maturation.</text>
</comment>
<comment type="subcellular location">
    <subcellularLocation>
        <location evidence="1">Cytoplasm</location>
    </subcellularLocation>
    <text evidence="1">Associates with late stage pre-50S ribosomal subunits.</text>
</comment>
<comment type="similarity">
    <text evidence="1">Belongs to the DarP family.</text>
</comment>
<name>DARP_YERPG</name>
<feature type="chain" id="PRO_1000198406" description="Dual-action ribosomal maturation protein DarP">
    <location>
        <begin position="1"/>
        <end position="182"/>
    </location>
</feature>
<evidence type="ECO:0000255" key="1">
    <source>
        <dbReference type="HAMAP-Rule" id="MF_00765"/>
    </source>
</evidence>
<keyword id="KW-0963">Cytoplasm</keyword>
<keyword id="KW-0690">Ribosome biogenesis</keyword>
<keyword id="KW-0694">RNA-binding</keyword>
<keyword id="KW-0699">rRNA-binding</keyword>
<accession>A9R1V4</accession>
<organism>
    <name type="scientific">Yersinia pestis bv. Antiqua (strain Angola)</name>
    <dbReference type="NCBI Taxonomy" id="349746"/>
    <lineage>
        <taxon>Bacteria</taxon>
        <taxon>Pseudomonadati</taxon>
        <taxon>Pseudomonadota</taxon>
        <taxon>Gammaproteobacteria</taxon>
        <taxon>Enterobacterales</taxon>
        <taxon>Yersiniaceae</taxon>
        <taxon>Yersinia</taxon>
    </lineage>
</organism>
<dbReference type="EMBL" id="CP000901">
    <property type="protein sequence ID" value="ABX84966.1"/>
    <property type="molecule type" value="Genomic_DNA"/>
</dbReference>
<dbReference type="SMR" id="A9R1V4"/>
<dbReference type="KEGG" id="ypg:YpAngola_A1170"/>
<dbReference type="PATRIC" id="fig|349746.12.peg.2122"/>
<dbReference type="GO" id="GO:0005829">
    <property type="term" value="C:cytosol"/>
    <property type="evidence" value="ECO:0007669"/>
    <property type="project" value="TreeGrafter"/>
</dbReference>
<dbReference type="GO" id="GO:0043022">
    <property type="term" value="F:ribosome binding"/>
    <property type="evidence" value="ECO:0007669"/>
    <property type="project" value="UniProtKB-UniRule"/>
</dbReference>
<dbReference type="GO" id="GO:0019843">
    <property type="term" value="F:rRNA binding"/>
    <property type="evidence" value="ECO:0007669"/>
    <property type="project" value="UniProtKB-UniRule"/>
</dbReference>
<dbReference type="GO" id="GO:1902626">
    <property type="term" value="P:assembly of large subunit precursor of preribosome"/>
    <property type="evidence" value="ECO:0007669"/>
    <property type="project" value="UniProtKB-UniRule"/>
</dbReference>
<dbReference type="CDD" id="cd16331">
    <property type="entry name" value="YjgA-like"/>
    <property type="match status" value="1"/>
</dbReference>
<dbReference type="FunFam" id="1.10.60.30:FF:000001">
    <property type="entry name" value="UPF0307 protein YjgA"/>
    <property type="match status" value="1"/>
</dbReference>
<dbReference type="FunFam" id="1.10.60.30:FF:000002">
    <property type="entry name" value="UPF0307 protein YjgA"/>
    <property type="match status" value="1"/>
</dbReference>
<dbReference type="Gene3D" id="1.10.60.30">
    <property type="entry name" value="PSPTO4464-like domains"/>
    <property type="match status" value="2"/>
</dbReference>
<dbReference type="HAMAP" id="MF_00765">
    <property type="entry name" value="DarP"/>
    <property type="match status" value="1"/>
</dbReference>
<dbReference type="InterPro" id="IPR006839">
    <property type="entry name" value="DarP"/>
</dbReference>
<dbReference type="InterPro" id="IPR023153">
    <property type="entry name" value="DarP_sf"/>
</dbReference>
<dbReference type="NCBIfam" id="NF003593">
    <property type="entry name" value="PRK05255.1-1"/>
    <property type="match status" value="1"/>
</dbReference>
<dbReference type="PANTHER" id="PTHR38101">
    <property type="entry name" value="UPF0307 PROTEIN YJGA"/>
    <property type="match status" value="1"/>
</dbReference>
<dbReference type="PANTHER" id="PTHR38101:SF1">
    <property type="entry name" value="UPF0307 PROTEIN YJGA"/>
    <property type="match status" value="1"/>
</dbReference>
<dbReference type="Pfam" id="PF04751">
    <property type="entry name" value="DarP"/>
    <property type="match status" value="1"/>
</dbReference>
<dbReference type="PIRSF" id="PIRSF016183">
    <property type="entry name" value="UCP016183"/>
    <property type="match status" value="1"/>
</dbReference>
<dbReference type="SUPFAM" id="SSF158710">
    <property type="entry name" value="PSPTO4464-like"/>
    <property type="match status" value="1"/>
</dbReference>
<gene>
    <name evidence="1" type="primary">darP</name>
    <name type="ordered locus">YpAngola_A1170</name>
</gene>
<protein>
    <recommendedName>
        <fullName evidence="1">Dual-action ribosomal maturation protein DarP</fullName>
    </recommendedName>
    <alternativeName>
        <fullName evidence="1">Large ribosomal subunit assembly factor DarP</fullName>
    </alternativeName>
</protein>
<proteinExistence type="inferred from homology"/>
<sequence length="182" mass="21156">MNKQPEDWLDDVPENKNDDDDEIIWVSKSEIKRDAEALKDLGTELVDLGKNALERIPLDEDLLAAIELAQKIKKEGRRRQLQLIGKMLRARDVEPIQTALDKLKNRHNQQISLFHKLETLRDRLIAEGDEAIPTVLELYPDADRQQLRSLVRNAQKEQAANKPPKSFRQIFSYLRELAEKKQ</sequence>
<reference key="1">
    <citation type="journal article" date="2010" name="J. Bacteriol.">
        <title>Genome sequence of the deep-rooted Yersinia pestis strain Angola reveals new insights into the evolution and pangenome of the plague bacterium.</title>
        <authorList>
            <person name="Eppinger M."/>
            <person name="Worsham P.L."/>
            <person name="Nikolich M.P."/>
            <person name="Riley D.R."/>
            <person name="Sebastian Y."/>
            <person name="Mou S."/>
            <person name="Achtman M."/>
            <person name="Lindler L.E."/>
            <person name="Ravel J."/>
        </authorList>
    </citation>
    <scope>NUCLEOTIDE SEQUENCE [LARGE SCALE GENOMIC DNA]</scope>
    <source>
        <strain>Angola</strain>
    </source>
</reference>